<gene>
    <name type="primary">Rlim</name>
    <name type="synonym">Rnf12</name>
</gene>
<dbReference type="EC" id="2.3.2.27"/>
<dbReference type="EMBL" id="AF069992">
    <property type="protein sequence ID" value="AAD34209.1"/>
    <property type="molecule type" value="mRNA"/>
</dbReference>
<dbReference type="EMBL" id="AK013207">
    <property type="protein sequence ID" value="BAB28712.1"/>
    <property type="molecule type" value="mRNA"/>
</dbReference>
<dbReference type="EMBL" id="AK029295">
    <property type="protein sequence ID" value="BAC26379.1"/>
    <property type="molecule type" value="mRNA"/>
</dbReference>
<dbReference type="EMBL" id="AL805911">
    <property type="status" value="NOT_ANNOTATED_CDS"/>
    <property type="molecule type" value="Genomic_DNA"/>
</dbReference>
<dbReference type="EMBL" id="CH466564">
    <property type="protein sequence ID" value="EDL14089.1"/>
    <property type="molecule type" value="Genomic_DNA"/>
</dbReference>
<dbReference type="EMBL" id="CH466564">
    <property type="protein sequence ID" value="EDL14090.1"/>
    <property type="molecule type" value="Genomic_DNA"/>
</dbReference>
<dbReference type="EMBL" id="BC012960">
    <property type="protein sequence ID" value="AAH12960.1"/>
    <property type="molecule type" value="mRNA"/>
</dbReference>
<dbReference type="CCDS" id="CCDS30331.1"/>
<dbReference type="RefSeq" id="NP_001345134.1">
    <property type="nucleotide sequence ID" value="NM_001358205.2"/>
</dbReference>
<dbReference type="RefSeq" id="NP_001412889.1">
    <property type="nucleotide sequence ID" value="NM_001425960.1"/>
</dbReference>
<dbReference type="RefSeq" id="NP_001412890.1">
    <property type="nucleotide sequence ID" value="NM_001425961.1"/>
</dbReference>
<dbReference type="RefSeq" id="NP_001412891.1">
    <property type="nucleotide sequence ID" value="NM_001425962.1"/>
</dbReference>
<dbReference type="RefSeq" id="NP_001412892.1">
    <property type="nucleotide sequence ID" value="NM_001425963.1"/>
</dbReference>
<dbReference type="RefSeq" id="NP_001412893.1">
    <property type="nucleotide sequence ID" value="NM_001425964.1"/>
</dbReference>
<dbReference type="RefSeq" id="NP_001412894.1">
    <property type="nucleotide sequence ID" value="NM_001425965.1"/>
</dbReference>
<dbReference type="RefSeq" id="NP_001412895.1">
    <property type="nucleotide sequence ID" value="NM_001425966.1"/>
</dbReference>
<dbReference type="RefSeq" id="NP_035406.3">
    <property type="nucleotide sequence ID" value="NM_011276.3"/>
</dbReference>
<dbReference type="RefSeq" id="XP_006527981.1">
    <property type="nucleotide sequence ID" value="XM_006527918.5"/>
</dbReference>
<dbReference type="RefSeq" id="XP_006527982.1">
    <property type="nucleotide sequence ID" value="XM_006527919.3"/>
</dbReference>
<dbReference type="RefSeq" id="XP_006527983.1">
    <property type="nucleotide sequence ID" value="XM_006527920.4"/>
</dbReference>
<dbReference type="RefSeq" id="XP_006527984.1">
    <property type="nucleotide sequence ID" value="XM_006527921.5"/>
</dbReference>
<dbReference type="RefSeq" id="XP_011245853.1">
    <property type="nucleotide sequence ID" value="XM_011247551.2"/>
</dbReference>
<dbReference type="RefSeq" id="XP_011245854.1">
    <property type="nucleotide sequence ID" value="XM_011247552.2"/>
</dbReference>
<dbReference type="SMR" id="Q9WTV7"/>
<dbReference type="BioGRID" id="202918">
    <property type="interactions" value="14"/>
</dbReference>
<dbReference type="DIP" id="DIP-46445N"/>
<dbReference type="FunCoup" id="Q9WTV7">
    <property type="interactions" value="4090"/>
</dbReference>
<dbReference type="IntAct" id="Q9WTV7">
    <property type="interactions" value="11"/>
</dbReference>
<dbReference type="MINT" id="Q9WTV7"/>
<dbReference type="STRING" id="10090.ENSMUSP00000112820"/>
<dbReference type="iPTMnet" id="Q9WTV7"/>
<dbReference type="PhosphoSitePlus" id="Q9WTV7"/>
<dbReference type="jPOST" id="Q9WTV7"/>
<dbReference type="PaxDb" id="10090-ENSMUSP00000112820"/>
<dbReference type="PeptideAtlas" id="Q9WTV7"/>
<dbReference type="ProteomicsDB" id="300552"/>
<dbReference type="Pumba" id="Q9WTV7"/>
<dbReference type="Antibodypedia" id="13786">
    <property type="antibodies" value="194 antibodies from 25 providers"/>
</dbReference>
<dbReference type="DNASU" id="19820"/>
<dbReference type="Ensembl" id="ENSMUST00000070705.6">
    <property type="protein sequence ID" value="ENSMUSP00000070662.5"/>
    <property type="gene ID" value="ENSMUSG00000056537.12"/>
</dbReference>
<dbReference type="Ensembl" id="ENSMUST00000121153.8">
    <property type="protein sequence ID" value="ENSMUSP00000112820.2"/>
    <property type="gene ID" value="ENSMUSG00000056537.12"/>
</dbReference>
<dbReference type="GeneID" id="19820"/>
<dbReference type="KEGG" id="mmu:19820"/>
<dbReference type="UCSC" id="uc009tzz.1">
    <property type="organism name" value="mouse"/>
</dbReference>
<dbReference type="AGR" id="MGI:1342291"/>
<dbReference type="CTD" id="51132"/>
<dbReference type="MGI" id="MGI:1342291">
    <property type="gene designation" value="Rlim"/>
</dbReference>
<dbReference type="VEuPathDB" id="HostDB:ENSMUSG00000056537"/>
<dbReference type="eggNOG" id="KOG0800">
    <property type="taxonomic scope" value="Eukaryota"/>
</dbReference>
<dbReference type="eggNOG" id="KOG4628">
    <property type="taxonomic scope" value="Eukaryota"/>
</dbReference>
<dbReference type="GeneTree" id="ENSGT00940000155753"/>
<dbReference type="HOGENOM" id="CLU_025933_1_0_1"/>
<dbReference type="InParanoid" id="Q9WTV7"/>
<dbReference type="OMA" id="YEGGHEG"/>
<dbReference type="OrthoDB" id="8062037at2759"/>
<dbReference type="PhylomeDB" id="Q9WTV7"/>
<dbReference type="TreeFam" id="TF325756"/>
<dbReference type="Reactome" id="R-MMU-983168">
    <property type="pathway name" value="Antigen processing: Ubiquitination &amp; Proteasome degradation"/>
</dbReference>
<dbReference type="UniPathway" id="UPA00143"/>
<dbReference type="BioGRID-ORCS" id="19820">
    <property type="hits" value="3 hits in 81 CRISPR screens"/>
</dbReference>
<dbReference type="ChiTaRS" id="Rlim">
    <property type="organism name" value="mouse"/>
</dbReference>
<dbReference type="PRO" id="PR:Q9WTV7"/>
<dbReference type="Proteomes" id="UP000000589">
    <property type="component" value="Chromosome X"/>
</dbReference>
<dbReference type="RNAct" id="Q9WTV7">
    <property type="molecule type" value="protein"/>
</dbReference>
<dbReference type="Bgee" id="ENSMUSG00000056537">
    <property type="expression patterns" value="Expressed in ectoplacental cone and 268 other cell types or tissues"/>
</dbReference>
<dbReference type="GO" id="GO:0005829">
    <property type="term" value="C:cytosol"/>
    <property type="evidence" value="ECO:0007669"/>
    <property type="project" value="Ensembl"/>
</dbReference>
<dbReference type="GO" id="GO:0005654">
    <property type="term" value="C:nucleoplasm"/>
    <property type="evidence" value="ECO:0007669"/>
    <property type="project" value="Ensembl"/>
</dbReference>
<dbReference type="GO" id="GO:0005634">
    <property type="term" value="C:nucleus"/>
    <property type="evidence" value="ECO:0000314"/>
    <property type="project" value="UniProtKB"/>
</dbReference>
<dbReference type="GO" id="GO:0061630">
    <property type="term" value="F:ubiquitin protein ligase activity"/>
    <property type="evidence" value="ECO:0000314"/>
    <property type="project" value="MGI"/>
</dbReference>
<dbReference type="GO" id="GO:0004842">
    <property type="term" value="F:ubiquitin-protein transferase activity"/>
    <property type="evidence" value="ECO:0000314"/>
    <property type="project" value="UniProtKB"/>
</dbReference>
<dbReference type="GO" id="GO:0008270">
    <property type="term" value="F:zinc ion binding"/>
    <property type="evidence" value="ECO:0007669"/>
    <property type="project" value="UniProtKB-KW"/>
</dbReference>
<dbReference type="GO" id="GO:0000122">
    <property type="term" value="P:negative regulation of transcription by RNA polymerase II"/>
    <property type="evidence" value="ECO:0000316"/>
    <property type="project" value="MGI"/>
</dbReference>
<dbReference type="GO" id="GO:0016567">
    <property type="term" value="P:protein ubiquitination"/>
    <property type="evidence" value="ECO:0000314"/>
    <property type="project" value="UniProtKB"/>
</dbReference>
<dbReference type="GO" id="GO:0060816">
    <property type="term" value="P:random inactivation of X chromosome"/>
    <property type="evidence" value="ECO:0000314"/>
    <property type="project" value="UniProtKB"/>
</dbReference>
<dbReference type="GO" id="GO:0006511">
    <property type="term" value="P:ubiquitin-dependent protein catabolic process"/>
    <property type="evidence" value="ECO:0000314"/>
    <property type="project" value="UniProtKB"/>
</dbReference>
<dbReference type="CDD" id="cd16674">
    <property type="entry name" value="RING-H2_RNF12"/>
    <property type="match status" value="1"/>
</dbReference>
<dbReference type="FunFam" id="3.30.40.10:FF:000054">
    <property type="entry name" value="E3 ubiquitin-protein ligase RLIM isoform X1"/>
    <property type="match status" value="1"/>
</dbReference>
<dbReference type="Gene3D" id="3.30.40.10">
    <property type="entry name" value="Zinc/RING finger domain, C3HC4 (zinc finger)"/>
    <property type="match status" value="1"/>
</dbReference>
<dbReference type="InterPro" id="IPR051834">
    <property type="entry name" value="RING_finger_E3_ligase"/>
</dbReference>
<dbReference type="InterPro" id="IPR001841">
    <property type="entry name" value="Znf_RING"/>
</dbReference>
<dbReference type="InterPro" id="IPR013083">
    <property type="entry name" value="Znf_RING/FYVE/PHD"/>
</dbReference>
<dbReference type="PANTHER" id="PTHR45931:SF4">
    <property type="entry name" value="E3 UBIQUITIN-PROTEIN LIGASE RLIM"/>
    <property type="match status" value="1"/>
</dbReference>
<dbReference type="PANTHER" id="PTHR45931">
    <property type="entry name" value="SI:CH211-59O9.10"/>
    <property type="match status" value="1"/>
</dbReference>
<dbReference type="Pfam" id="PF13639">
    <property type="entry name" value="zf-RING_2"/>
    <property type="match status" value="1"/>
</dbReference>
<dbReference type="SMART" id="SM00184">
    <property type="entry name" value="RING"/>
    <property type="match status" value="1"/>
</dbReference>
<dbReference type="SUPFAM" id="SSF57850">
    <property type="entry name" value="RING/U-box"/>
    <property type="match status" value="1"/>
</dbReference>
<dbReference type="PROSITE" id="PS50089">
    <property type="entry name" value="ZF_RING_2"/>
    <property type="match status" value="1"/>
</dbReference>
<accession>Q9WTV7</accession>
<accession>Q8CE02</accession>
<accession>Q91X19</accession>
<accession>Q9CYY2</accession>
<sequence length="600" mass="66377">MENSDSNDKGSDQSAAQRRSQMDRLDREEAFYQFVNNLSEEDYRLMRDNNLLGTPGESTEEELLRRLQQIKEGPPPQSPDENRAGESSDDVTNSDSIIDWLNSVRQTGNTTRSGQRGNQSWRAVSRTNPNSGDFRFSLEINVNRNNGSQTSENESEPSTRRLSVENMESSSQRQMENSASESASARPSRAERNSAEAVTEVPTTRAQRRARSRSPEHRRTRARAERSRSPLQPTSEIPRRAPTLEQSSENEPEGSSRTRHHVTLRQQISGPELLGRGLFAASGSRNPSQGTSSSDTGSNSESSGSGQRPPTIVLDLQVRRVRPGEYRQRDSIASRTRSRSQAPNNTVTYESERGGFRRTFSRSERAGVRTYVSTIRIPIRRILNTGLSETTSVAIQTMLRQIMTGFGELSYFMYSDSDSEPSASVSSRNVERVESRNGRGSSGGGNSSGSSSSSSPSPSSSGESSESSSEMFEGSSEGGSSGPSRRDGRHRAPVTFDESGSLPFLSLAQFFLLNEDDEDQPRGLTKEQIDNLAMRSFGENDALKTCSVCITEYTEGNKLRKLPCSHEYHVHCIDRWLSENSTCPICRRAVLSSGNRESVV</sequence>
<protein>
    <recommendedName>
        <fullName>E3 ubiquitin-protein ligase RLIM</fullName>
        <ecNumber>2.3.2.27</ecNumber>
    </recommendedName>
    <alternativeName>
        <fullName>LIM domain-interacting RING finger protein</fullName>
    </alternativeName>
    <alternativeName>
        <fullName>RING finger LIM domain-binding protein</fullName>
        <shortName>R-LIM</shortName>
    </alternativeName>
    <alternativeName>
        <fullName>RING finger protein 12</fullName>
    </alternativeName>
    <alternativeName>
        <fullName evidence="11">RING-type E3 ubiquitin transferase RLIM</fullName>
    </alternativeName>
</protein>
<feature type="chain" id="PRO_0000056053" description="E3 ubiquitin-protein ligase RLIM">
    <location>
        <begin position="1"/>
        <end position="600"/>
    </location>
</feature>
<feature type="zinc finger region" description="RING-type" evidence="4">
    <location>
        <begin position="546"/>
        <end position="587"/>
    </location>
</feature>
<feature type="region of interest" description="Disordered" evidence="5">
    <location>
        <begin position="1"/>
        <end position="24"/>
    </location>
</feature>
<feature type="region of interest" description="Disordered" evidence="5">
    <location>
        <begin position="49"/>
        <end position="355"/>
    </location>
</feature>
<feature type="region of interest" description="Disordered" evidence="5">
    <location>
        <begin position="417"/>
        <end position="497"/>
    </location>
</feature>
<feature type="short sequence motif" description="PDZ-binding" evidence="3">
    <location>
        <begin position="597"/>
        <end position="600"/>
    </location>
</feature>
<feature type="compositionally biased region" description="Basic and acidic residues" evidence="5">
    <location>
        <begin position="1"/>
        <end position="11"/>
    </location>
</feature>
<feature type="compositionally biased region" description="Polar residues" evidence="5">
    <location>
        <begin position="103"/>
        <end position="131"/>
    </location>
</feature>
<feature type="compositionally biased region" description="Polar residues" evidence="5">
    <location>
        <begin position="140"/>
        <end position="152"/>
    </location>
</feature>
<feature type="compositionally biased region" description="Polar residues" evidence="5">
    <location>
        <begin position="166"/>
        <end position="175"/>
    </location>
</feature>
<feature type="compositionally biased region" description="Low complexity" evidence="5">
    <location>
        <begin position="176"/>
        <end position="187"/>
    </location>
</feature>
<feature type="compositionally biased region" description="Basic and acidic residues" evidence="5">
    <location>
        <begin position="213"/>
        <end position="228"/>
    </location>
</feature>
<feature type="compositionally biased region" description="Polar residues" evidence="5">
    <location>
        <begin position="244"/>
        <end position="255"/>
    </location>
</feature>
<feature type="compositionally biased region" description="Low complexity" evidence="5">
    <location>
        <begin position="288"/>
        <end position="306"/>
    </location>
</feature>
<feature type="compositionally biased region" description="Basic and acidic residues" evidence="5">
    <location>
        <begin position="322"/>
        <end position="332"/>
    </location>
</feature>
<feature type="compositionally biased region" description="Polar residues" evidence="5">
    <location>
        <begin position="333"/>
        <end position="349"/>
    </location>
</feature>
<feature type="compositionally biased region" description="Low complexity" evidence="5">
    <location>
        <begin position="448"/>
        <end position="475"/>
    </location>
</feature>
<feature type="modified residue" description="N-acetylmethionine" evidence="2">
    <location>
        <position position="1"/>
    </location>
</feature>
<feature type="modified residue" description="Phosphoserine" evidence="12">
    <location>
        <position position="163"/>
    </location>
</feature>
<feature type="modified residue" description="Phosphoserine" evidence="2">
    <location>
        <position position="194"/>
    </location>
</feature>
<feature type="modified residue" description="Phosphoserine" evidence="12">
    <location>
        <position position="227"/>
    </location>
</feature>
<feature type="modified residue" description="Phosphoserine" evidence="12">
    <location>
        <position position="229"/>
    </location>
</feature>
<feature type="modified residue" description="Phosphoserine" evidence="2">
    <location>
        <position position="269"/>
    </location>
</feature>
<feature type="sequence conflict" description="In Ref. 1; AAD34209." evidence="11" ref="1">
    <original>G</original>
    <variation>R</variation>
    <location>
        <position position="114"/>
    </location>
</feature>
<feature type="sequence conflict" description="In Ref. 2; BAC26379." evidence="11" ref="2">
    <original>N</original>
    <variation>S</variation>
    <location>
        <position position="146"/>
    </location>
</feature>
<feature type="sequence conflict" description="In Ref. 1; AAD34209." evidence="11" ref="1">
    <original>A</original>
    <variation>T</variation>
    <location>
        <position position="195"/>
    </location>
</feature>
<feature type="sequence conflict" description="In Ref. 1; AAD34209." evidence="11" ref="1">
    <original>R</original>
    <variation>M</variation>
    <location>
        <position position="228"/>
    </location>
</feature>
<feature type="sequence conflict" description="In Ref. 2; BAC26379." evidence="11" ref="2">
    <original>R</original>
    <variation>G</variation>
    <location>
        <position position="320"/>
    </location>
</feature>
<feature type="sequence conflict" description="In Ref. 2; BAB28712." evidence="11" ref="2">
    <original>R</original>
    <variation>S</variation>
    <location>
        <position position="362"/>
    </location>
</feature>
<feature type="sequence conflict" description="In Ref. 1; AAD34209." evidence="11" ref="1">
    <original>E</original>
    <variation>K</variation>
    <location>
        <position position="470"/>
    </location>
</feature>
<feature type="sequence conflict" description="In Ref. 1; AAD34209." evidence="11" ref="1">
    <original>R</original>
    <variation>K</variation>
    <location>
        <position position="486"/>
    </location>
</feature>
<feature type="sequence conflict" description="In Ref. 1; AAD34209." evidence="11" ref="1">
    <original>L</original>
    <variation>F</variation>
    <location>
        <position position="505"/>
    </location>
</feature>
<feature type="sequence conflict" description="In Ref. 1; AAD34209." evidence="11" ref="1">
    <original>N</original>
    <variation>D</variation>
    <location>
        <position position="557"/>
    </location>
</feature>
<feature type="sequence conflict" description="In Ref. 1; AAD34209." evidence="11" ref="1">
    <original>Y</original>
    <variation>F</variation>
    <location>
        <position position="568"/>
    </location>
</feature>
<comment type="function">
    <text evidence="6 7 9 10">E3 ubiquitin-protein ligase that acts as a negative coregulator for LIM homeodomain transcription factors by mediating the ubiquitination and subsequent degradation of LIM cofactors LDB1 and LDB2 and by mediating the recruitment the SIN3a/histone deacetylase corepressor complex. Ubiquitination and degradation of LIM cofactors LDB1 and LDB2 allows DNA-bound LIM homeodomain transcription factors to interact with other protein partners such as RLIM. Plays a role in telomere length-mediated growth suppression by mediating the ubiquitination and degradation of TERF1. By targeting ZFP42 for degradation, acts as an activator of random inactivation of X chromosome in the embryo, a stochastic process in which one X chromosome is inactivated to minimize sex-related dosage differences of X-encoded genes in somatic cells of female placental mammals.</text>
</comment>
<comment type="catalytic activity">
    <reaction>
        <text>S-ubiquitinyl-[E2 ubiquitin-conjugating enzyme]-L-cysteine + [acceptor protein]-L-lysine = [E2 ubiquitin-conjugating enzyme]-L-cysteine + N(6)-ubiquitinyl-[acceptor protein]-L-lysine.</text>
        <dbReference type="EC" id="2.3.2.27"/>
    </reaction>
</comment>
<comment type="pathway">
    <text>Protein modification; protein ubiquitination.</text>
</comment>
<comment type="subunit">
    <text evidence="1 7 8">Interacts (via N-terminus) with TERF1. Interacts (via C-terminus) with ESR1 (By similarity). Interacts with LIM/homeobox factors such as LHX3. Interacts with LDB1, LDB2 and SIN3A. Interacts with LIMK1.</text>
</comment>
<comment type="interaction">
    <interactant intactId="EBI-15657872">
        <id>Q9WTV7</id>
    </interactant>
    <interactant intactId="EBI-15657830">
        <id>O55203</id>
        <label>Ldb2</label>
    </interactant>
    <organismsDiffer>false</organismsDiffer>
    <experiments>2</experiments>
</comment>
<comment type="interaction">
    <interactant intactId="EBI-15657872">
        <id>Q9WTV7</id>
    </interactant>
    <interactant intactId="EBI-2313372">
        <id>P22227</id>
        <label>Zfp42</label>
    </interactant>
    <organismsDiffer>false</organismsDiffer>
    <experiments>8</experiments>
</comment>
<comment type="subcellular location">
    <subcellularLocation>
        <location evidence="9">Nucleus</location>
    </subcellularLocation>
</comment>
<comment type="developmental stage">
    <text evidence="9">Ubiquitously expressed in early development. Expressed in the time window of embryonic stem (ES) cell differentiation.</text>
</comment>
<comment type="induction">
    <text evidence="9">Expressed at higher level in female compared to males cells (at protein level).</text>
</comment>
<comment type="similarity">
    <text evidence="11">Belongs to the RNF12 family.</text>
</comment>
<reference key="1">
    <citation type="journal article" date="1999" name="Nat. Genet.">
        <title>RLIM inhibits functional activity of LIM homeodomain transcription factors via recruitment of the histone deacetylase complex.</title>
        <authorList>
            <person name="Bach I."/>
            <person name="Rodriguez-Esteban C."/>
            <person name="Carriere C."/>
            <person name="Bhushan A."/>
            <person name="Krones A."/>
            <person name="Rose D.W."/>
            <person name="Glass C.K."/>
            <person name="Andersen B."/>
            <person name="Izpisua-Belmonte J.-C."/>
            <person name="Rosenfeld M.G."/>
        </authorList>
    </citation>
    <scope>NUCLEOTIDE SEQUENCE [MRNA]</scope>
    <scope>FUNCTION</scope>
    <source>
        <tissue>Pituitary</tissue>
    </source>
</reference>
<reference key="2">
    <citation type="journal article" date="2005" name="Science">
        <title>The transcriptional landscape of the mammalian genome.</title>
        <authorList>
            <person name="Carninci P."/>
            <person name="Kasukawa T."/>
            <person name="Katayama S."/>
            <person name="Gough J."/>
            <person name="Frith M.C."/>
            <person name="Maeda N."/>
            <person name="Oyama R."/>
            <person name="Ravasi T."/>
            <person name="Lenhard B."/>
            <person name="Wells C."/>
            <person name="Kodzius R."/>
            <person name="Shimokawa K."/>
            <person name="Bajic V.B."/>
            <person name="Brenner S.E."/>
            <person name="Batalov S."/>
            <person name="Forrest A.R."/>
            <person name="Zavolan M."/>
            <person name="Davis M.J."/>
            <person name="Wilming L.G."/>
            <person name="Aidinis V."/>
            <person name="Allen J.E."/>
            <person name="Ambesi-Impiombato A."/>
            <person name="Apweiler R."/>
            <person name="Aturaliya R.N."/>
            <person name="Bailey T.L."/>
            <person name="Bansal M."/>
            <person name="Baxter L."/>
            <person name="Beisel K.W."/>
            <person name="Bersano T."/>
            <person name="Bono H."/>
            <person name="Chalk A.M."/>
            <person name="Chiu K.P."/>
            <person name="Choudhary V."/>
            <person name="Christoffels A."/>
            <person name="Clutterbuck D.R."/>
            <person name="Crowe M.L."/>
            <person name="Dalla E."/>
            <person name="Dalrymple B.P."/>
            <person name="de Bono B."/>
            <person name="Della Gatta G."/>
            <person name="di Bernardo D."/>
            <person name="Down T."/>
            <person name="Engstrom P."/>
            <person name="Fagiolini M."/>
            <person name="Faulkner G."/>
            <person name="Fletcher C.F."/>
            <person name="Fukushima T."/>
            <person name="Furuno M."/>
            <person name="Futaki S."/>
            <person name="Gariboldi M."/>
            <person name="Georgii-Hemming P."/>
            <person name="Gingeras T.R."/>
            <person name="Gojobori T."/>
            <person name="Green R.E."/>
            <person name="Gustincich S."/>
            <person name="Harbers M."/>
            <person name="Hayashi Y."/>
            <person name="Hensch T.K."/>
            <person name="Hirokawa N."/>
            <person name="Hill D."/>
            <person name="Huminiecki L."/>
            <person name="Iacono M."/>
            <person name="Ikeo K."/>
            <person name="Iwama A."/>
            <person name="Ishikawa T."/>
            <person name="Jakt M."/>
            <person name="Kanapin A."/>
            <person name="Katoh M."/>
            <person name="Kawasawa Y."/>
            <person name="Kelso J."/>
            <person name="Kitamura H."/>
            <person name="Kitano H."/>
            <person name="Kollias G."/>
            <person name="Krishnan S.P."/>
            <person name="Kruger A."/>
            <person name="Kummerfeld S.K."/>
            <person name="Kurochkin I.V."/>
            <person name="Lareau L.F."/>
            <person name="Lazarevic D."/>
            <person name="Lipovich L."/>
            <person name="Liu J."/>
            <person name="Liuni S."/>
            <person name="McWilliam S."/>
            <person name="Madan Babu M."/>
            <person name="Madera M."/>
            <person name="Marchionni L."/>
            <person name="Matsuda H."/>
            <person name="Matsuzawa S."/>
            <person name="Miki H."/>
            <person name="Mignone F."/>
            <person name="Miyake S."/>
            <person name="Morris K."/>
            <person name="Mottagui-Tabar S."/>
            <person name="Mulder N."/>
            <person name="Nakano N."/>
            <person name="Nakauchi H."/>
            <person name="Ng P."/>
            <person name="Nilsson R."/>
            <person name="Nishiguchi S."/>
            <person name="Nishikawa S."/>
            <person name="Nori F."/>
            <person name="Ohara O."/>
            <person name="Okazaki Y."/>
            <person name="Orlando V."/>
            <person name="Pang K.C."/>
            <person name="Pavan W.J."/>
            <person name="Pavesi G."/>
            <person name="Pesole G."/>
            <person name="Petrovsky N."/>
            <person name="Piazza S."/>
            <person name="Reed J."/>
            <person name="Reid J.F."/>
            <person name="Ring B.Z."/>
            <person name="Ringwald M."/>
            <person name="Rost B."/>
            <person name="Ruan Y."/>
            <person name="Salzberg S.L."/>
            <person name="Sandelin A."/>
            <person name="Schneider C."/>
            <person name="Schoenbach C."/>
            <person name="Sekiguchi K."/>
            <person name="Semple C.A."/>
            <person name="Seno S."/>
            <person name="Sessa L."/>
            <person name="Sheng Y."/>
            <person name="Shibata Y."/>
            <person name="Shimada H."/>
            <person name="Shimada K."/>
            <person name="Silva D."/>
            <person name="Sinclair B."/>
            <person name="Sperling S."/>
            <person name="Stupka E."/>
            <person name="Sugiura K."/>
            <person name="Sultana R."/>
            <person name="Takenaka Y."/>
            <person name="Taki K."/>
            <person name="Tammoja K."/>
            <person name="Tan S.L."/>
            <person name="Tang S."/>
            <person name="Taylor M.S."/>
            <person name="Tegner J."/>
            <person name="Teichmann S.A."/>
            <person name="Ueda H.R."/>
            <person name="van Nimwegen E."/>
            <person name="Verardo R."/>
            <person name="Wei C.L."/>
            <person name="Yagi K."/>
            <person name="Yamanishi H."/>
            <person name="Zabarovsky E."/>
            <person name="Zhu S."/>
            <person name="Zimmer A."/>
            <person name="Hide W."/>
            <person name="Bult C."/>
            <person name="Grimmond S.M."/>
            <person name="Teasdale R.D."/>
            <person name="Liu E.T."/>
            <person name="Brusic V."/>
            <person name="Quackenbush J."/>
            <person name="Wahlestedt C."/>
            <person name="Mattick J.S."/>
            <person name="Hume D.A."/>
            <person name="Kai C."/>
            <person name="Sasaki D."/>
            <person name="Tomaru Y."/>
            <person name="Fukuda S."/>
            <person name="Kanamori-Katayama M."/>
            <person name="Suzuki M."/>
            <person name="Aoki J."/>
            <person name="Arakawa T."/>
            <person name="Iida J."/>
            <person name="Imamura K."/>
            <person name="Itoh M."/>
            <person name="Kato T."/>
            <person name="Kawaji H."/>
            <person name="Kawagashira N."/>
            <person name="Kawashima T."/>
            <person name="Kojima M."/>
            <person name="Kondo S."/>
            <person name="Konno H."/>
            <person name="Nakano K."/>
            <person name="Ninomiya N."/>
            <person name="Nishio T."/>
            <person name="Okada M."/>
            <person name="Plessy C."/>
            <person name="Shibata K."/>
            <person name="Shiraki T."/>
            <person name="Suzuki S."/>
            <person name="Tagami M."/>
            <person name="Waki K."/>
            <person name="Watahiki A."/>
            <person name="Okamura-Oho Y."/>
            <person name="Suzuki H."/>
            <person name="Kawai J."/>
            <person name="Hayashizaki Y."/>
        </authorList>
    </citation>
    <scope>NUCLEOTIDE SEQUENCE [LARGE SCALE MRNA]</scope>
    <source>
        <strain>C57BL/6J</strain>
        <tissue>Embryo</tissue>
        <tissue>Head</tissue>
    </source>
</reference>
<reference key="3">
    <citation type="journal article" date="2009" name="PLoS Biol.">
        <title>Lineage-specific biology revealed by a finished genome assembly of the mouse.</title>
        <authorList>
            <person name="Church D.M."/>
            <person name="Goodstadt L."/>
            <person name="Hillier L.W."/>
            <person name="Zody M.C."/>
            <person name="Goldstein S."/>
            <person name="She X."/>
            <person name="Bult C.J."/>
            <person name="Agarwala R."/>
            <person name="Cherry J.L."/>
            <person name="DiCuccio M."/>
            <person name="Hlavina W."/>
            <person name="Kapustin Y."/>
            <person name="Meric P."/>
            <person name="Maglott D."/>
            <person name="Birtle Z."/>
            <person name="Marques A.C."/>
            <person name="Graves T."/>
            <person name="Zhou S."/>
            <person name="Teague B."/>
            <person name="Potamousis K."/>
            <person name="Churas C."/>
            <person name="Place M."/>
            <person name="Herschleb J."/>
            <person name="Runnheim R."/>
            <person name="Forrest D."/>
            <person name="Amos-Landgraf J."/>
            <person name="Schwartz D.C."/>
            <person name="Cheng Z."/>
            <person name="Lindblad-Toh K."/>
            <person name="Eichler E.E."/>
            <person name="Ponting C.P."/>
        </authorList>
    </citation>
    <scope>NUCLEOTIDE SEQUENCE [LARGE SCALE GENOMIC DNA]</scope>
    <source>
        <strain>C57BL/6J</strain>
    </source>
</reference>
<reference key="4">
    <citation type="submission" date="2005-09" db="EMBL/GenBank/DDBJ databases">
        <authorList>
            <person name="Mural R.J."/>
            <person name="Adams M.D."/>
            <person name="Myers E.W."/>
            <person name="Smith H.O."/>
            <person name="Venter J.C."/>
        </authorList>
    </citation>
    <scope>NUCLEOTIDE SEQUENCE [LARGE SCALE GENOMIC DNA]</scope>
</reference>
<reference key="5">
    <citation type="journal article" date="2004" name="Genome Res.">
        <title>The status, quality, and expansion of the NIH full-length cDNA project: the Mammalian Gene Collection (MGC).</title>
        <authorList>
            <consortium name="The MGC Project Team"/>
        </authorList>
    </citation>
    <scope>NUCLEOTIDE SEQUENCE [LARGE SCALE MRNA]</scope>
    <source>
        <strain>FVB/N</strain>
        <tissue>Salivary gland</tissue>
    </source>
</reference>
<reference key="6">
    <citation type="journal article" date="2002" name="Nature">
        <title>Ubiquitination-dependent cofactor exchange on LIM homeodomain transcription factors.</title>
        <authorList>
            <person name="Ostendorff H.P."/>
            <person name="Peirano R.I."/>
            <person name="Peters M.A."/>
            <person name="Schluter A."/>
            <person name="Bossenz M."/>
            <person name="Scheffner M."/>
            <person name="Bach I."/>
        </authorList>
    </citation>
    <scope>FUNCTION</scope>
    <scope>INTERACTION WITH LHX3; LDB1; LDB2 AND SIN3A</scope>
</reference>
<reference key="7">
    <citation type="journal article" date="2005" name="Genes Dev.">
        <title>The ubiquitin ligase Rnf6 regulates local LIM kinase 1 levels in axonal growth cones.</title>
        <authorList>
            <person name="Tursun B."/>
            <person name="Schlueter A."/>
            <person name="Peters M.A."/>
            <person name="Viehweger B."/>
            <person name="Ostendorff H.P."/>
            <person name="Soosairajah J."/>
            <person name="Drung A."/>
            <person name="Bossenz M."/>
            <person name="Johnsen S.A."/>
            <person name="Schweizer M."/>
            <person name="Bernard O."/>
            <person name="Bach I."/>
        </authorList>
    </citation>
    <scope>INTERACTION WITH LIMK1</scope>
</reference>
<reference key="8">
    <citation type="journal article" date="2009" name="Cell">
        <title>RNF12 is an X-encoded dose-dependent activator of X chromosome inactivation.</title>
        <authorList>
            <person name="Jonkers I."/>
            <person name="Barakat T.S."/>
            <person name="Achame E.M."/>
            <person name="Monkhorst K."/>
            <person name="Kenter A."/>
            <person name="Rentmeester E."/>
            <person name="Grosveld F."/>
            <person name="Grootegoed J.A."/>
            <person name="Gribnau J."/>
        </authorList>
    </citation>
    <scope>FUNCTION</scope>
    <scope>SUBCELLULAR LOCATION</scope>
    <scope>INDUCTION</scope>
    <scope>DEVELOPMENTAL STAGE</scope>
</reference>
<reference key="9">
    <citation type="journal article" date="2010" name="Cell">
        <title>A tissue-specific atlas of mouse protein phosphorylation and expression.</title>
        <authorList>
            <person name="Huttlin E.L."/>
            <person name="Jedrychowski M.P."/>
            <person name="Elias J.E."/>
            <person name="Goswami T."/>
            <person name="Rad R."/>
            <person name="Beausoleil S.A."/>
            <person name="Villen J."/>
            <person name="Haas W."/>
            <person name="Sowa M.E."/>
            <person name="Gygi S.P."/>
        </authorList>
    </citation>
    <scope>PHOSPHORYLATION [LARGE SCALE ANALYSIS] AT SER-163; SER-227 AND SER-229</scope>
    <scope>IDENTIFICATION BY MASS SPECTROMETRY [LARGE SCALE ANALYSIS]</scope>
    <source>
        <tissue>Brain</tissue>
        <tissue>Brown adipose tissue</tissue>
        <tissue>Heart</tissue>
        <tissue>Kidney</tissue>
        <tissue>Liver</tissue>
        <tissue>Lung</tissue>
        <tissue>Pancreas</tissue>
        <tissue>Spleen</tissue>
        <tissue>Testis</tissue>
    </source>
</reference>
<reference key="10">
    <citation type="journal article" date="2012" name="Nature">
        <title>RNF12 initiates X-chromosome inactivation by targeting REX1 for degradation.</title>
        <authorList>
            <person name="Gontan C."/>
            <person name="Achame E.M."/>
            <person name="Demmers J."/>
            <person name="Barakat T.S."/>
            <person name="Rentmeester E."/>
            <person name="van Ijcken W."/>
            <person name="Grootegoed J.A."/>
            <person name="Gribnau J."/>
        </authorList>
    </citation>
    <scope>FUNCTION</scope>
</reference>
<evidence type="ECO:0000250" key="1"/>
<evidence type="ECO:0000250" key="2">
    <source>
        <dbReference type="UniProtKB" id="Q9NVW2"/>
    </source>
</evidence>
<evidence type="ECO:0000255" key="3"/>
<evidence type="ECO:0000255" key="4">
    <source>
        <dbReference type="PROSITE-ProRule" id="PRU00175"/>
    </source>
</evidence>
<evidence type="ECO:0000256" key="5">
    <source>
        <dbReference type="SAM" id="MobiDB-lite"/>
    </source>
</evidence>
<evidence type="ECO:0000269" key="6">
    <source>
    </source>
</evidence>
<evidence type="ECO:0000269" key="7">
    <source>
    </source>
</evidence>
<evidence type="ECO:0000269" key="8">
    <source>
    </source>
</evidence>
<evidence type="ECO:0000269" key="9">
    <source>
    </source>
</evidence>
<evidence type="ECO:0000269" key="10">
    <source>
    </source>
</evidence>
<evidence type="ECO:0000305" key="11"/>
<evidence type="ECO:0007744" key="12">
    <source>
    </source>
</evidence>
<organism>
    <name type="scientific">Mus musculus</name>
    <name type="common">Mouse</name>
    <dbReference type="NCBI Taxonomy" id="10090"/>
    <lineage>
        <taxon>Eukaryota</taxon>
        <taxon>Metazoa</taxon>
        <taxon>Chordata</taxon>
        <taxon>Craniata</taxon>
        <taxon>Vertebrata</taxon>
        <taxon>Euteleostomi</taxon>
        <taxon>Mammalia</taxon>
        <taxon>Eutheria</taxon>
        <taxon>Euarchontoglires</taxon>
        <taxon>Glires</taxon>
        <taxon>Rodentia</taxon>
        <taxon>Myomorpha</taxon>
        <taxon>Muroidea</taxon>
        <taxon>Muridae</taxon>
        <taxon>Murinae</taxon>
        <taxon>Mus</taxon>
        <taxon>Mus</taxon>
    </lineage>
</organism>
<keyword id="KW-0007">Acetylation</keyword>
<keyword id="KW-0479">Metal-binding</keyword>
<keyword id="KW-0539">Nucleus</keyword>
<keyword id="KW-0597">Phosphoprotein</keyword>
<keyword id="KW-1185">Reference proteome</keyword>
<keyword id="KW-0804">Transcription</keyword>
<keyword id="KW-0805">Transcription regulation</keyword>
<keyword id="KW-0808">Transferase</keyword>
<keyword id="KW-0833">Ubl conjugation pathway</keyword>
<keyword id="KW-0862">Zinc</keyword>
<keyword id="KW-0863">Zinc-finger</keyword>
<proteinExistence type="evidence at protein level"/>
<name>RNF12_MOUSE</name>